<dbReference type="EC" id="2.7.7.19" evidence="4 9 10 11 12"/>
<dbReference type="EC" id="2.7.7.52" evidence="5 6 7 9 10 11"/>
<dbReference type="EMBL" id="CU329670">
    <property type="protein sequence ID" value="CAB50789.1"/>
    <property type="molecule type" value="Genomic_DNA"/>
</dbReference>
<dbReference type="EMBL" id="AF105076">
    <property type="protein sequence ID" value="AAD16889.1"/>
    <property type="molecule type" value="mRNA"/>
</dbReference>
<dbReference type="PIR" id="T37963">
    <property type="entry name" value="T37963"/>
</dbReference>
<dbReference type="RefSeq" id="NP_594901.1">
    <property type="nucleotide sequence ID" value="NM_001020330.2"/>
</dbReference>
<dbReference type="PDB" id="4E7X">
    <property type="method" value="X-ray"/>
    <property type="resolution" value="3.20 A"/>
    <property type="chains" value="A/B/C/D=1-405"/>
</dbReference>
<dbReference type="PDB" id="4E80">
    <property type="method" value="X-ray"/>
    <property type="resolution" value="3.02 A"/>
    <property type="chains" value="A/B/C/D=1-405"/>
</dbReference>
<dbReference type="PDB" id="4E8F">
    <property type="method" value="X-ray"/>
    <property type="resolution" value="2.60 A"/>
    <property type="chains" value="A/B=1-405"/>
</dbReference>
<dbReference type="PDB" id="4EP7">
    <property type="method" value="X-ray"/>
    <property type="resolution" value="2.28 A"/>
    <property type="chains" value="A/B=40-377"/>
</dbReference>
<dbReference type="PDB" id="4FH3">
    <property type="method" value="X-ray"/>
    <property type="resolution" value="2.00 A"/>
    <property type="chains" value="A=33-377"/>
</dbReference>
<dbReference type="PDB" id="4FH5">
    <property type="method" value="X-ray"/>
    <property type="resolution" value="2.30 A"/>
    <property type="chains" value="A=33-377"/>
</dbReference>
<dbReference type="PDB" id="4FHP">
    <property type="method" value="X-ray"/>
    <property type="resolution" value="2.50 A"/>
    <property type="chains" value="A=33-377"/>
</dbReference>
<dbReference type="PDB" id="4FHV">
    <property type="method" value="X-ray"/>
    <property type="resolution" value="2.10 A"/>
    <property type="chains" value="A=33-377"/>
</dbReference>
<dbReference type="PDB" id="4FHW">
    <property type="method" value="X-ray"/>
    <property type="resolution" value="2.50 A"/>
    <property type="chains" value="A=33-377"/>
</dbReference>
<dbReference type="PDB" id="4FHX">
    <property type="method" value="X-ray"/>
    <property type="resolution" value="2.70 A"/>
    <property type="chains" value="A=33-377"/>
</dbReference>
<dbReference type="PDB" id="4FHY">
    <property type="method" value="X-ray"/>
    <property type="resolution" value="2.70 A"/>
    <property type="chains" value="A=33-377"/>
</dbReference>
<dbReference type="PDB" id="4NKT">
    <property type="method" value="X-ray"/>
    <property type="resolution" value="1.90 A"/>
    <property type="chains" value="A/B=40-377"/>
</dbReference>
<dbReference type="PDB" id="4NKU">
    <property type="method" value="X-ray"/>
    <property type="resolution" value="1.94 A"/>
    <property type="chains" value="A/B=40-377"/>
</dbReference>
<dbReference type="PDB" id="4UD4">
    <property type="method" value="X-ray"/>
    <property type="resolution" value="1.74 A"/>
    <property type="chains" value="A/B=40-405"/>
</dbReference>
<dbReference type="PDB" id="4UD5">
    <property type="method" value="X-ray"/>
    <property type="resolution" value="2.52 A"/>
    <property type="chains" value="A/B=40-405"/>
</dbReference>
<dbReference type="PDBsum" id="4E7X"/>
<dbReference type="PDBsum" id="4E80"/>
<dbReference type="PDBsum" id="4E8F"/>
<dbReference type="PDBsum" id="4EP7"/>
<dbReference type="PDBsum" id="4FH3"/>
<dbReference type="PDBsum" id="4FH5"/>
<dbReference type="PDBsum" id="4FHP"/>
<dbReference type="PDBsum" id="4FHV"/>
<dbReference type="PDBsum" id="4FHW"/>
<dbReference type="PDBsum" id="4FHX"/>
<dbReference type="PDBsum" id="4FHY"/>
<dbReference type="PDBsum" id="4NKT"/>
<dbReference type="PDBsum" id="4NKU"/>
<dbReference type="PDBsum" id="4UD4"/>
<dbReference type="PDBsum" id="4UD5"/>
<dbReference type="SMR" id="O13833"/>
<dbReference type="BioGRID" id="278883">
    <property type="interactions" value="30"/>
</dbReference>
<dbReference type="FunCoup" id="O13833">
    <property type="interactions" value="161"/>
</dbReference>
<dbReference type="STRING" id="284812.O13833"/>
<dbReference type="iPTMnet" id="O13833"/>
<dbReference type="PaxDb" id="4896-SPAC19D5.03.1"/>
<dbReference type="EnsemblFungi" id="SPAC19D5.03.1">
    <property type="protein sequence ID" value="SPAC19D5.03.1:pep"/>
    <property type="gene ID" value="SPAC19D5.03"/>
</dbReference>
<dbReference type="GeneID" id="2542420"/>
<dbReference type="KEGG" id="spo:2542420"/>
<dbReference type="PomBase" id="SPAC19D5.03">
    <property type="gene designation" value="cid1"/>
</dbReference>
<dbReference type="VEuPathDB" id="FungiDB:SPAC19D5.03"/>
<dbReference type="eggNOG" id="KOG2277">
    <property type="taxonomic scope" value="Eukaryota"/>
</dbReference>
<dbReference type="HOGENOM" id="CLU_033943_0_2_1"/>
<dbReference type="InParanoid" id="O13833"/>
<dbReference type="OMA" id="TICKRRV"/>
<dbReference type="PhylomeDB" id="O13833"/>
<dbReference type="EvolutionaryTrace" id="O13833"/>
<dbReference type="PRO" id="PR:O13833"/>
<dbReference type="Proteomes" id="UP000002485">
    <property type="component" value="Chromosome I"/>
</dbReference>
<dbReference type="GO" id="GO:0005737">
    <property type="term" value="C:cytoplasm"/>
    <property type="evidence" value="ECO:0000314"/>
    <property type="project" value="PomBase"/>
</dbReference>
<dbReference type="GO" id="GO:0005829">
    <property type="term" value="C:cytosol"/>
    <property type="evidence" value="ECO:0007005"/>
    <property type="project" value="PomBase"/>
</dbReference>
<dbReference type="GO" id="GO:0005524">
    <property type="term" value="F:ATP binding"/>
    <property type="evidence" value="ECO:0007669"/>
    <property type="project" value="UniProtKB-KW"/>
</dbReference>
<dbReference type="GO" id="GO:0000287">
    <property type="term" value="F:magnesium ion binding"/>
    <property type="evidence" value="ECO:0000314"/>
    <property type="project" value="PomBase"/>
</dbReference>
<dbReference type="GO" id="GO:1990817">
    <property type="term" value="F:poly(A) RNA polymerase activity"/>
    <property type="evidence" value="ECO:0007669"/>
    <property type="project" value="UniProtKB-EC"/>
</dbReference>
<dbReference type="GO" id="GO:0003723">
    <property type="term" value="F:RNA binding"/>
    <property type="evidence" value="ECO:0000314"/>
    <property type="project" value="PomBase"/>
</dbReference>
<dbReference type="GO" id="GO:0050265">
    <property type="term" value="F:RNA uridylyltransferase activity"/>
    <property type="evidence" value="ECO:0000314"/>
    <property type="project" value="PomBase"/>
</dbReference>
<dbReference type="GO" id="GO:0002134">
    <property type="term" value="F:UTP binding"/>
    <property type="evidence" value="ECO:0000314"/>
    <property type="project" value="PomBase"/>
</dbReference>
<dbReference type="GO" id="GO:0060212">
    <property type="term" value="P:negative regulation of nuclear-transcribed mRNA poly(A) tail shortening"/>
    <property type="evidence" value="ECO:0000315"/>
    <property type="project" value="PomBase"/>
</dbReference>
<dbReference type="GO" id="GO:0036450">
    <property type="term" value="P:polyuridylation-dependent decapping of nuclear-transcribed mRNA"/>
    <property type="evidence" value="ECO:0000315"/>
    <property type="project" value="PomBase"/>
</dbReference>
<dbReference type="GO" id="GO:0031123">
    <property type="term" value="P:RNA 3'-end processing"/>
    <property type="evidence" value="ECO:0000318"/>
    <property type="project" value="GO_Central"/>
</dbReference>
<dbReference type="CDD" id="cd05402">
    <property type="entry name" value="NT_PAP_TUTase"/>
    <property type="match status" value="1"/>
</dbReference>
<dbReference type="FunFam" id="1.10.1410.10:FF:000018">
    <property type="entry name" value="Terminal uridylyltransferase cid1"/>
    <property type="match status" value="1"/>
</dbReference>
<dbReference type="FunFam" id="3.30.460.10:FF:000067">
    <property type="entry name" value="Terminal uridylyltransferase cid1"/>
    <property type="match status" value="1"/>
</dbReference>
<dbReference type="Gene3D" id="1.10.1410.10">
    <property type="match status" value="1"/>
</dbReference>
<dbReference type="Gene3D" id="3.30.460.10">
    <property type="entry name" value="Beta Polymerase, domain 2"/>
    <property type="match status" value="1"/>
</dbReference>
<dbReference type="InterPro" id="IPR054708">
    <property type="entry name" value="MTPAP-like_central"/>
</dbReference>
<dbReference type="InterPro" id="IPR043519">
    <property type="entry name" value="NT_sf"/>
</dbReference>
<dbReference type="InterPro" id="IPR002058">
    <property type="entry name" value="PAP_assoc"/>
</dbReference>
<dbReference type="PANTHER" id="PTHR12271">
    <property type="entry name" value="POLY A POLYMERASE CID PAP -RELATED"/>
    <property type="match status" value="1"/>
</dbReference>
<dbReference type="PANTHER" id="PTHR12271:SF40">
    <property type="entry name" value="POLY(A) RNA POLYMERASE GLD2"/>
    <property type="match status" value="1"/>
</dbReference>
<dbReference type="Pfam" id="PF22600">
    <property type="entry name" value="MTPAP-like_central"/>
    <property type="match status" value="1"/>
</dbReference>
<dbReference type="Pfam" id="PF03828">
    <property type="entry name" value="PAP_assoc"/>
    <property type="match status" value="1"/>
</dbReference>
<dbReference type="SUPFAM" id="SSF81301">
    <property type="entry name" value="Nucleotidyltransferase"/>
    <property type="match status" value="1"/>
</dbReference>
<dbReference type="SUPFAM" id="SSF81631">
    <property type="entry name" value="PAP/OAS1 substrate-binding domain"/>
    <property type="match status" value="1"/>
</dbReference>
<keyword id="KW-0002">3D-structure</keyword>
<keyword id="KW-0067">ATP-binding</keyword>
<keyword id="KW-0963">Cytoplasm</keyword>
<keyword id="KW-0460">Magnesium</keyword>
<keyword id="KW-0464">Manganese</keyword>
<keyword id="KW-0479">Metal-binding</keyword>
<keyword id="KW-0547">Nucleotide-binding</keyword>
<keyword id="KW-0548">Nucleotidyltransferase</keyword>
<keyword id="KW-1185">Reference proteome</keyword>
<keyword id="KW-0808">Transferase</keyword>
<reference key="1">
    <citation type="journal article" date="2000" name="Mol. Cell. Biol.">
        <title>Cid1, a fission yeast protein required for S-M checkpoint control when DNA polymerase delta or epsilon is inactivated.</title>
        <authorList>
            <person name="Wang S.-W."/>
            <person name="Toda T."/>
            <person name="MacCallum R."/>
            <person name="Harris A.L."/>
            <person name="Norbury C."/>
        </authorList>
    </citation>
    <scope>NUCLEOTIDE SEQUENCE [MRNA]</scope>
    <scope>FUNCTION</scope>
    <source>
        <strain>972 / ATCC 24843</strain>
    </source>
</reference>
<reference key="2">
    <citation type="journal article" date="2002" name="Nature">
        <title>The genome sequence of Schizosaccharomyces pombe.</title>
        <authorList>
            <person name="Wood V."/>
            <person name="Gwilliam R."/>
            <person name="Rajandream M.A."/>
            <person name="Lyne M.H."/>
            <person name="Lyne R."/>
            <person name="Stewart A."/>
            <person name="Sgouros J.G."/>
            <person name="Peat N."/>
            <person name="Hayles J."/>
            <person name="Baker S.G."/>
            <person name="Basham D."/>
            <person name="Bowman S."/>
            <person name="Brooks K."/>
            <person name="Brown D."/>
            <person name="Brown S."/>
            <person name="Chillingworth T."/>
            <person name="Churcher C.M."/>
            <person name="Collins M."/>
            <person name="Connor R."/>
            <person name="Cronin A."/>
            <person name="Davis P."/>
            <person name="Feltwell T."/>
            <person name="Fraser A."/>
            <person name="Gentles S."/>
            <person name="Goble A."/>
            <person name="Hamlin N."/>
            <person name="Harris D.E."/>
            <person name="Hidalgo J."/>
            <person name="Hodgson G."/>
            <person name="Holroyd S."/>
            <person name="Hornsby T."/>
            <person name="Howarth S."/>
            <person name="Huckle E.J."/>
            <person name="Hunt S."/>
            <person name="Jagels K."/>
            <person name="James K.D."/>
            <person name="Jones L."/>
            <person name="Jones M."/>
            <person name="Leather S."/>
            <person name="McDonald S."/>
            <person name="McLean J."/>
            <person name="Mooney P."/>
            <person name="Moule S."/>
            <person name="Mungall K.L."/>
            <person name="Murphy L.D."/>
            <person name="Niblett D."/>
            <person name="Odell C."/>
            <person name="Oliver K."/>
            <person name="O'Neil S."/>
            <person name="Pearson D."/>
            <person name="Quail M.A."/>
            <person name="Rabbinowitsch E."/>
            <person name="Rutherford K.M."/>
            <person name="Rutter S."/>
            <person name="Saunders D."/>
            <person name="Seeger K."/>
            <person name="Sharp S."/>
            <person name="Skelton J."/>
            <person name="Simmonds M.N."/>
            <person name="Squares R."/>
            <person name="Squares S."/>
            <person name="Stevens K."/>
            <person name="Taylor K."/>
            <person name="Taylor R.G."/>
            <person name="Tivey A."/>
            <person name="Walsh S.V."/>
            <person name="Warren T."/>
            <person name="Whitehead S."/>
            <person name="Woodward J.R."/>
            <person name="Volckaert G."/>
            <person name="Aert R."/>
            <person name="Robben J."/>
            <person name="Grymonprez B."/>
            <person name="Weltjens I."/>
            <person name="Vanstreels E."/>
            <person name="Rieger M."/>
            <person name="Schaefer M."/>
            <person name="Mueller-Auer S."/>
            <person name="Gabel C."/>
            <person name="Fuchs M."/>
            <person name="Duesterhoeft A."/>
            <person name="Fritzc C."/>
            <person name="Holzer E."/>
            <person name="Moestl D."/>
            <person name="Hilbert H."/>
            <person name="Borzym K."/>
            <person name="Langer I."/>
            <person name="Beck A."/>
            <person name="Lehrach H."/>
            <person name="Reinhardt R."/>
            <person name="Pohl T.M."/>
            <person name="Eger P."/>
            <person name="Zimmermann W."/>
            <person name="Wedler H."/>
            <person name="Wambutt R."/>
            <person name="Purnelle B."/>
            <person name="Goffeau A."/>
            <person name="Cadieu E."/>
            <person name="Dreano S."/>
            <person name="Gloux S."/>
            <person name="Lelaure V."/>
            <person name="Mottier S."/>
            <person name="Galibert F."/>
            <person name="Aves S.J."/>
            <person name="Xiang Z."/>
            <person name="Hunt C."/>
            <person name="Moore K."/>
            <person name="Hurst S.M."/>
            <person name="Lucas M."/>
            <person name="Rochet M."/>
            <person name="Gaillardin C."/>
            <person name="Tallada V.A."/>
            <person name="Garzon A."/>
            <person name="Thode G."/>
            <person name="Daga R.R."/>
            <person name="Cruzado L."/>
            <person name="Jimenez J."/>
            <person name="Sanchez M."/>
            <person name="del Rey F."/>
            <person name="Benito J."/>
            <person name="Dominguez A."/>
            <person name="Revuelta J.L."/>
            <person name="Moreno S."/>
            <person name="Armstrong J."/>
            <person name="Forsburg S.L."/>
            <person name="Cerutti L."/>
            <person name="Lowe T."/>
            <person name="McCombie W.R."/>
            <person name="Paulsen I."/>
            <person name="Potashkin J."/>
            <person name="Shpakovski G.V."/>
            <person name="Ussery D."/>
            <person name="Barrell B.G."/>
            <person name="Nurse P."/>
        </authorList>
    </citation>
    <scope>NUCLEOTIDE SEQUENCE [LARGE SCALE GENOMIC DNA]</scope>
    <source>
        <strain>972 / ATCC 24843</strain>
    </source>
</reference>
<reference key="3">
    <citation type="journal article" date="2002" name="Proc. Natl. Acad. Sci. U.S.A.">
        <title>Cytoplasmic poly(A) polymerases mediate cellular responses to S phase arrest.</title>
        <authorList>
            <person name="Read R.L."/>
            <person name="Martinho R.G."/>
            <person name="Wang S.W."/>
            <person name="Carr A.M."/>
            <person name="Norbury C.J."/>
        </authorList>
    </citation>
    <scope>FUNCTION</scope>
    <scope>CATALYTIC ACTIVITY</scope>
    <scope>MUTAGENESIS OF ASP-101 AND ASP-103</scope>
    <scope>SUBCELLULAR LOCATION</scope>
</reference>
<reference key="4">
    <citation type="journal article" date="2007" name="Mol. Cell. Biol.">
        <title>Efficient RNA polyuridylation by noncanonical poly(A) polymerases.</title>
        <authorList>
            <person name="Rissland O.S."/>
            <person name="Mikulasova A."/>
            <person name="Norbury C.J."/>
        </authorList>
    </citation>
    <scope>FUNCTION</scope>
    <scope>CATALYTIC ACTIVITY</scope>
    <scope>COFACTOR</scope>
</reference>
<reference key="5">
    <citation type="journal article" date="2007" name="RNA">
        <title>A family of poly(U) polymerases.</title>
        <authorList>
            <person name="Kwak J.E."/>
            <person name="Wickens M."/>
        </authorList>
    </citation>
    <scope>FUNCTION</scope>
    <scope>CATALYTIC ACTIVITY</scope>
</reference>
<reference key="6">
    <citation type="journal article" date="2009" name="Nat. Struct. Mol. Biol.">
        <title>Decapping is preceded by 3' uridylation in a novel pathway of bulk mRNA turnover.</title>
        <authorList>
            <person name="Rissland O.S."/>
            <person name="Norbury C.J."/>
        </authorList>
    </citation>
    <scope>FUNCTION</scope>
    <scope>CATALYTIC ACTIVITY</scope>
    <scope>DISRUPTION PHENOTYPE</scope>
</reference>
<reference evidence="18 19 20" key="7">
    <citation type="journal article" date="2012" name="Nat. Struct. Mol. Biol.">
        <title>Structural basis for the activity of a cytoplasmic RNA terminal uridylyl transferase.</title>
        <authorList>
            <person name="Yates L.A."/>
            <person name="Fleurdepine S."/>
            <person name="Rissland O.S."/>
            <person name="De Colibus L."/>
            <person name="Harlos K."/>
            <person name="Norbury C.J."/>
            <person name="Gilbert R.J."/>
        </authorList>
    </citation>
    <scope>X-RAY CRYSTALLOGRAPHY (2.60 ANGSTROMS) IN COMPLEX WITH UTP</scope>
    <scope>RNA-BINDING</scope>
    <scope>MUTAGENESIS OF ASP-101; ASP-103; LYS-133; ARG-137; ARG-277; LYS-282; LYS-321; ARG-323; ASP-330; GLU-333 AND HIS-336</scope>
    <scope>CATALYTIC ACTIVITY</scope>
</reference>
<reference evidence="22 23 24 25 26 27 28" key="8">
    <citation type="journal article" date="2012" name="Nucleic Acids Res.">
        <title>Crystal structures of the Cid1 poly (U) polymerase reveal the mechanism for UTP selectivity.</title>
        <authorList>
            <person name="Lunde B.M."/>
            <person name="Magler I."/>
            <person name="Meinhart A."/>
        </authorList>
    </citation>
    <scope>X-RAY CRYSTALLOGRAPHY (2.00 ANGSTROMS) OF 33-377 IN COMPLEX WITH ATP; CTP AND UTP</scope>
    <scope>COFACTOR</scope>
    <scope>CATALYTIC ACTIVITY</scope>
    <scope>MUTAGENESIS OF ASP-160 AND HIS-336</scope>
    <scope>BIOPHYSICOCHEMICAL PROPERTIES</scope>
</reference>
<reference evidence="21" key="9">
    <citation type="journal article" date="2012" name="Structure">
        <title>Functional implications from the Cid1 poly(U) polymerase crystal structure.</title>
        <authorList>
            <person name="Munoz-Tello P."/>
            <person name="Gabus C."/>
            <person name="Thore S."/>
        </authorList>
    </citation>
    <scope>X-RAY CRYSTALLOGRAPHY (2.28 ANGSTROMS) OF 40-377 IN COMPLEX WITH UTP AND MAGNESIUM</scope>
    <scope>RNA-BINDING</scope>
</reference>
<reference evidence="29 30" key="10">
    <citation type="journal article" date="2014" name="Nucleic Acids Res.">
        <title>A critical switch in the enzymatic properties of the Cid1 protein deciphered from its product-bound crystal structure.</title>
        <authorList>
            <person name="Munoz-Tello P."/>
            <person name="Gabus C."/>
            <person name="Thore S."/>
        </authorList>
    </citation>
    <scope>X-RAY CRYSTALLOGRAPHY (1.90 ANGSTROMS) OF 40-377 IN COMPLEX WITH UTP</scope>
    <scope>MUTAGENESIS OF LYS-144; ASP-160; ASN-165 AND PHE-332</scope>
    <scope>CATALYTIC ACTIVITY</scope>
</reference>
<reference evidence="31 32" key="11">
    <citation type="journal article" date="2015" name="Nucleic Acids Res.">
        <title>Structural plasticity of Cid1 provides a basis for its distributive RNA terminal uridylyl transferase activity.</title>
        <authorList>
            <person name="Yates L.A."/>
            <person name="Durrant B.P."/>
            <person name="Fleurdepine S."/>
            <person name="Harlos K."/>
            <person name="Norbury C.J."/>
            <person name="Gilbert R.J."/>
        </authorList>
    </citation>
    <scope>X-RAY CRYSTALLOGRAPHY (1.74 ANGSTROMS) OF 40-405</scope>
    <scope>MUTAGENESIS OF PHE-88; ASN-164 AND ASN-165</scope>
    <scope>CATALYTIC ACTIVITY</scope>
</reference>
<evidence type="ECO:0000255" key="1"/>
<evidence type="ECO:0000256" key="2">
    <source>
        <dbReference type="SAM" id="MobiDB-lite"/>
    </source>
</evidence>
<evidence type="ECO:0000269" key="3">
    <source>
    </source>
</evidence>
<evidence type="ECO:0000269" key="4">
    <source>
    </source>
</evidence>
<evidence type="ECO:0000269" key="5">
    <source>
    </source>
</evidence>
<evidence type="ECO:0000269" key="6">
    <source>
    </source>
</evidence>
<evidence type="ECO:0000269" key="7">
    <source>
    </source>
</evidence>
<evidence type="ECO:0000269" key="8">
    <source>
    </source>
</evidence>
<evidence type="ECO:0000269" key="9">
    <source>
    </source>
</evidence>
<evidence type="ECO:0000269" key="10">
    <source>
    </source>
</evidence>
<evidence type="ECO:0000269" key="11">
    <source>
    </source>
</evidence>
<evidence type="ECO:0000269" key="12">
    <source>
    </source>
</evidence>
<evidence type="ECO:0000303" key="13">
    <source>
    </source>
</evidence>
<evidence type="ECO:0000303" key="14">
    <source>
    </source>
</evidence>
<evidence type="ECO:0000303" key="15">
    <source>
    </source>
</evidence>
<evidence type="ECO:0000303" key="16">
    <source>
    </source>
</evidence>
<evidence type="ECO:0000305" key="17"/>
<evidence type="ECO:0007744" key="18">
    <source>
        <dbReference type="PDB" id="4E7X"/>
    </source>
</evidence>
<evidence type="ECO:0007744" key="19">
    <source>
        <dbReference type="PDB" id="4E80"/>
    </source>
</evidence>
<evidence type="ECO:0007744" key="20">
    <source>
        <dbReference type="PDB" id="4E8F"/>
    </source>
</evidence>
<evidence type="ECO:0007744" key="21">
    <source>
        <dbReference type="PDB" id="4EP7"/>
    </source>
</evidence>
<evidence type="ECO:0007744" key="22">
    <source>
        <dbReference type="PDB" id="4FH3"/>
    </source>
</evidence>
<evidence type="ECO:0007744" key="23">
    <source>
        <dbReference type="PDB" id="4FH5"/>
    </source>
</evidence>
<evidence type="ECO:0007744" key="24">
    <source>
        <dbReference type="PDB" id="4FHP"/>
    </source>
</evidence>
<evidence type="ECO:0007744" key="25">
    <source>
        <dbReference type="PDB" id="4FHV"/>
    </source>
</evidence>
<evidence type="ECO:0007744" key="26">
    <source>
        <dbReference type="PDB" id="4FHW"/>
    </source>
</evidence>
<evidence type="ECO:0007744" key="27">
    <source>
        <dbReference type="PDB" id="4FHX"/>
    </source>
</evidence>
<evidence type="ECO:0007744" key="28">
    <source>
        <dbReference type="PDB" id="4FHY"/>
    </source>
</evidence>
<evidence type="ECO:0007744" key="29">
    <source>
        <dbReference type="PDB" id="4NKT"/>
    </source>
</evidence>
<evidence type="ECO:0007744" key="30">
    <source>
        <dbReference type="PDB" id="4NKU"/>
    </source>
</evidence>
<evidence type="ECO:0007744" key="31">
    <source>
        <dbReference type="PDB" id="4UD4"/>
    </source>
</evidence>
<evidence type="ECO:0007744" key="32">
    <source>
        <dbReference type="PDB" id="4UD5"/>
    </source>
</evidence>
<evidence type="ECO:0007829" key="33">
    <source>
        <dbReference type="PDB" id="4EP7"/>
    </source>
</evidence>
<evidence type="ECO:0007829" key="34">
    <source>
        <dbReference type="PDB" id="4FH3"/>
    </source>
</evidence>
<evidence type="ECO:0007829" key="35">
    <source>
        <dbReference type="PDB" id="4UD4"/>
    </source>
</evidence>
<evidence type="ECO:0007829" key="36">
    <source>
        <dbReference type="PDB" id="4UD5"/>
    </source>
</evidence>
<protein>
    <recommendedName>
        <fullName evidence="17">Terminal uridylyltransferase cid1</fullName>
        <shortName evidence="17">TUTase cid1</shortName>
        <ecNumber evidence="4 9 10 11 12">2.7.7.19</ecNumber>
        <ecNumber evidence="5 6 7 9 10 11">2.7.7.52</ecNumber>
    </recommendedName>
    <alternativeName>
        <fullName evidence="13">Caffeine-induced death protein 1</fullName>
    </alternativeName>
    <alternativeName>
        <fullName evidence="14">Poly(A) polymerase cid1</fullName>
        <shortName evidence="14">PAP</shortName>
    </alternativeName>
    <alternativeName>
        <fullName evidence="15">Poly(U) polymerase cid1</fullName>
        <shortName evidence="16">PUP</shortName>
    </alternativeName>
</protein>
<sequence>MNISSAQFIPGVHTVEEIEAEIHKNLHISKSCSYQKVPNSHKEFTKFCYEVYNEIKISDKEFKEKRAALDTLRLCLKRISPDAELVAFGSLESGLALKNSDMDLCVLMDSRVQSDTIALQFYEELIAEGFEGKFLQRARIPIIKLTSDTKNGFGASFQCDIGFNNRLAIHNTLLLSSYTKLDARLKPMVLLVKHWAKRKQINSPYFGTLSSYGYVLMVLYYLIHVIKPPVFPNLLLSPLKQEKIVDGFDVGFDDKLEDIPPSQNYSSLGSLLHGFFRFYAYKFEPREKVVTFRRPDGYLTKQEKGWTSATEHTGSADQIIKDRYILAIEDPFEISHNVGRTVSSSGLYRIRGEFMAASRLLNSRSYPIPYDSLFEEAPIPPRRQKKTDEQSNKKLLNETDGDNSE</sequence>
<accession>O13833</accession>
<accession>O94608</accession>
<organism>
    <name type="scientific">Schizosaccharomyces pombe (strain 972 / ATCC 24843)</name>
    <name type="common">Fission yeast</name>
    <dbReference type="NCBI Taxonomy" id="284812"/>
    <lineage>
        <taxon>Eukaryota</taxon>
        <taxon>Fungi</taxon>
        <taxon>Dikarya</taxon>
        <taxon>Ascomycota</taxon>
        <taxon>Taphrinomycotina</taxon>
        <taxon>Schizosaccharomycetes</taxon>
        <taxon>Schizosaccharomycetales</taxon>
        <taxon>Schizosaccharomycetaceae</taxon>
        <taxon>Schizosaccharomyces</taxon>
    </lineage>
</organism>
<name>CID1_SCHPO</name>
<feature type="chain" id="PRO_0000120312" description="Terminal uridylyltransferase cid1">
    <location>
        <begin position="1"/>
        <end position="405"/>
    </location>
</feature>
<feature type="domain" description="PAP-associated" evidence="1">
    <location>
        <begin position="267"/>
        <end position="336"/>
    </location>
</feature>
<feature type="region of interest" description="Disordered" evidence="2">
    <location>
        <begin position="377"/>
        <end position="405"/>
    </location>
</feature>
<feature type="compositionally biased region" description="Basic and acidic residues" evidence="2">
    <location>
        <begin position="386"/>
        <end position="397"/>
    </location>
</feature>
<feature type="binding site" evidence="8 9 10 11 19 21 23 24 26 27 29">
    <location>
        <position position="90"/>
    </location>
    <ligand>
        <name>UTP</name>
        <dbReference type="ChEBI" id="CHEBI:46398"/>
    </ligand>
</feature>
<feature type="binding site" evidence="8 10 21 23 24 26 27 28">
    <location>
        <position position="101"/>
    </location>
    <ligand>
        <name>Mg(2+)</name>
        <dbReference type="ChEBI" id="CHEBI:18420"/>
        <note>catalytic</note>
    </ligand>
</feature>
<feature type="binding site" evidence="8 10 21 23 24 25 26 27 28">
    <location>
        <position position="103"/>
    </location>
    <ligand>
        <name>Mg(2+)</name>
        <dbReference type="ChEBI" id="CHEBI:18420"/>
        <note>catalytic</note>
    </ligand>
</feature>
<feature type="binding site" evidence="10 24 26">
    <location>
        <position position="168"/>
    </location>
    <ligand>
        <name>UTP</name>
        <dbReference type="ChEBI" id="CHEBI:46398"/>
    </ligand>
</feature>
<feature type="binding site" evidence="8 9 10 11 19 21 23 24 25 27 29 30">
    <location>
        <position position="171"/>
    </location>
    <ligand>
        <name>UTP</name>
        <dbReference type="ChEBI" id="CHEBI:46398"/>
    </ligand>
</feature>
<feature type="binding site" evidence="8 10 11 21 24 29 30">
    <location>
        <position position="172"/>
    </location>
    <ligand>
        <name>UTP</name>
        <dbReference type="ChEBI" id="CHEBI:46398"/>
    </ligand>
</feature>
<feature type="binding site" evidence="8 9 10 11 19 21 23 24 25 26 27 29">
    <location>
        <position position="193"/>
    </location>
    <ligand>
        <name>UTP</name>
        <dbReference type="ChEBI" id="CHEBI:46398"/>
    </ligand>
</feature>
<feature type="binding site" evidence="8 9 10 11 19 21 23 24 25 26 29">
    <location>
        <position position="197"/>
    </location>
    <ligand>
        <name>UTP</name>
        <dbReference type="ChEBI" id="CHEBI:46398"/>
    </ligand>
</feature>
<feature type="binding site" evidence="8 9 10 11 19 21 23 24 25 26 27 29">
    <location>
        <position position="211"/>
    </location>
    <ligand>
        <name>UTP</name>
        <dbReference type="ChEBI" id="CHEBI:46398"/>
    </ligand>
</feature>
<feature type="binding site" evidence="8 9 10 11 19 21 23 24 25 26 29 30">
    <location>
        <position position="212"/>
    </location>
    <ligand>
        <name>UTP</name>
        <dbReference type="ChEBI" id="CHEBI:46398"/>
    </ligand>
</feature>
<feature type="binding site" evidence="8 10 11 21 23 24 25 26 29 30">
    <location>
        <position position="336"/>
    </location>
    <ligand>
        <name>UTP</name>
        <dbReference type="ChEBI" id="CHEBI:46398"/>
    </ligand>
</feature>
<feature type="binding site" evidence="10 27">
    <location>
        <position position="340"/>
    </location>
    <ligand>
        <name>ATP</name>
        <dbReference type="ChEBI" id="CHEBI:30616"/>
    </ligand>
</feature>
<feature type="mutagenesis site" description="Impairs catalytic activity." evidence="12">
    <original>F</original>
    <variation>D</variation>
    <location>
        <position position="88"/>
    </location>
</feature>
<feature type="mutagenesis site" description="Abolishes catalytic activity but does not affect RNA binding; when associated with A-103." evidence="4 9">
    <original>D</original>
    <variation>A</variation>
    <location>
        <position position="101"/>
    </location>
</feature>
<feature type="mutagenesis site" description="Abolishes catalytic activity but does not affect RNA binding; when associated with A-101." evidence="4 9">
    <original>D</original>
    <variation>A</variation>
    <location>
        <position position="103"/>
    </location>
</feature>
<feature type="mutagenesis site" description="Impairs binding to RNA; when associated with A-137; A-321 and A-323. Also impairs binding to RNA; when associated with A-137; A-277 and A-282." evidence="9">
    <original>K</original>
    <variation>A</variation>
    <location>
        <position position="133"/>
    </location>
</feature>
<feature type="mutagenesis site" description="Impairs binding to RNA; when associated with A-133; A-321 and A-323. Also impairs binding to RNA; when associated with A-133; A-277 and A-282." evidence="9">
    <original>R</original>
    <variation>A</variation>
    <location>
        <position position="137"/>
    </location>
</feature>
<feature type="mutagenesis site" description="Reduces association with a 15-mer A stretch but does not affect association with a 15-mer U stretch." evidence="11">
    <original>K</original>
    <variation>A</variation>
    <location>
        <position position="144"/>
    </location>
</feature>
<feature type="mutagenesis site" description="Abolishes catalytic activity." evidence="10 11">
    <original>D</original>
    <variation>A</variation>
    <location>
        <position position="160"/>
    </location>
</feature>
<feature type="mutagenesis site" description="Predominantly performs monouridylation." evidence="12">
    <original>N</original>
    <variation>P</variation>
    <location>
        <position position="164"/>
    </location>
</feature>
<feature type="mutagenesis site" description="Abolishes catalytic activity." evidence="11 12">
    <original>N</original>
    <variation>A</variation>
    <variation>P</variation>
    <location>
        <position position="165"/>
    </location>
</feature>
<feature type="mutagenesis site" description="Impairs binding to RNA; when associated with A-282; A-133 and A-137. Also impairs binding to RNA; when associated with A-282; A-321 and A-323." evidence="9">
    <original>R</original>
    <variation>A</variation>
    <location>
        <position position="277"/>
    </location>
</feature>
<feature type="mutagenesis site" description="Impairs binding to RNA; when associated with A-277; A-133 and A-137. Also impairs binding to RNA; when associated with A-277; A-321 and A-323." evidence="9">
    <original>K</original>
    <variation>A</variation>
    <location>
        <position position="282"/>
    </location>
</feature>
<feature type="mutagenesis site" description="Impairs binding to RNA; when associated with A-323; A-277 and A-282. Also impairs binding to RNA; when associated with A-323; A-133 and A-137." evidence="9">
    <original>K</original>
    <variation>A</variation>
    <location>
        <position position="321"/>
    </location>
</feature>
<feature type="mutagenesis site" description="Impairs binding to RNA; when associated with A-321; A-277 and A-282. Also impairs binding to RNA; when associated with A-321; A-133 and A-137." evidence="9">
    <original>R</original>
    <variation>A</variation>
    <location>
        <position position="323"/>
    </location>
</feature>
<feature type="mutagenesis site" description="Leads to diminished TUTase activity." evidence="9">
    <original>D</original>
    <variation>A</variation>
    <location>
        <position position="330"/>
    </location>
</feature>
<feature type="mutagenesis site" description="Reduces capacity for binding RNAs." evidence="11">
    <original>F</original>
    <variation>A</variation>
    <location>
        <position position="332"/>
    </location>
</feature>
<feature type="mutagenesis site" description="Leads to diminished TUTase activity." evidence="9">
    <original>E</original>
    <variation>A</variation>
    <location>
        <position position="333"/>
    </location>
</feature>
<feature type="mutagenesis site" description="Abolishes the UTP specificity and converts Cid1 from a TUTase into a poly(A) polymerase (PAP)." evidence="9 10">
    <original>H</original>
    <variation>A</variation>
    <variation>N</variation>
    <location>
        <position position="336"/>
    </location>
</feature>
<feature type="helix" evidence="35">
    <location>
        <begin position="42"/>
        <end position="55"/>
    </location>
</feature>
<feature type="helix" evidence="35">
    <location>
        <begin position="59"/>
        <end position="79"/>
    </location>
</feature>
<feature type="strand" evidence="35">
    <location>
        <begin position="84"/>
        <end position="89"/>
    </location>
</feature>
<feature type="helix" evidence="35">
    <location>
        <begin position="90"/>
        <end position="93"/>
    </location>
</feature>
<feature type="strand" evidence="34">
    <location>
        <begin position="97"/>
        <end position="99"/>
    </location>
</feature>
<feature type="strand" evidence="35">
    <location>
        <begin position="102"/>
        <end position="107"/>
    </location>
</feature>
<feature type="helix" evidence="35">
    <location>
        <begin position="115"/>
        <end position="127"/>
    </location>
</feature>
<feature type="strand" evidence="35">
    <location>
        <begin position="131"/>
        <end position="137"/>
    </location>
</feature>
<feature type="strand" evidence="35">
    <location>
        <begin position="140"/>
        <end position="147"/>
    </location>
</feature>
<feature type="strand" evidence="35">
    <location>
        <begin position="159"/>
        <end position="164"/>
    </location>
</feature>
<feature type="helix" evidence="35">
    <location>
        <begin position="166"/>
        <end position="181"/>
    </location>
</feature>
<feature type="helix" evidence="35">
    <location>
        <begin position="185"/>
        <end position="198"/>
    </location>
</feature>
<feature type="helix" evidence="35">
    <location>
        <begin position="204"/>
        <end position="206"/>
    </location>
</feature>
<feature type="helix" evidence="35">
    <location>
        <begin position="211"/>
        <end position="224"/>
    </location>
</feature>
<feature type="strand" evidence="35">
    <location>
        <begin position="226"/>
        <end position="228"/>
    </location>
</feature>
<feature type="turn" evidence="35">
    <location>
        <begin position="234"/>
        <end position="236"/>
    </location>
</feature>
<feature type="helix" evidence="35">
    <location>
        <begin position="256"/>
        <end position="258"/>
    </location>
</feature>
<feature type="helix" evidence="35">
    <location>
        <begin position="268"/>
        <end position="281"/>
    </location>
</feature>
<feature type="turn" evidence="35">
    <location>
        <begin position="285"/>
        <end position="287"/>
    </location>
</feature>
<feature type="strand" evidence="33">
    <location>
        <begin position="288"/>
        <end position="290"/>
    </location>
</feature>
<feature type="strand" evidence="35">
    <location>
        <begin position="292"/>
        <end position="294"/>
    </location>
</feature>
<feature type="helix" evidence="35">
    <location>
        <begin position="301"/>
        <end position="304"/>
    </location>
</feature>
<feature type="strand" evidence="36">
    <location>
        <begin position="310"/>
        <end position="313"/>
    </location>
</feature>
<feature type="strand" evidence="36">
    <location>
        <begin position="319"/>
        <end position="322"/>
    </location>
</feature>
<feature type="strand" evidence="33">
    <location>
        <begin position="325"/>
        <end position="329"/>
    </location>
</feature>
<feature type="strand" evidence="35">
    <location>
        <begin position="331"/>
        <end position="333"/>
    </location>
</feature>
<feature type="helix" evidence="35">
    <location>
        <begin position="338"/>
        <end position="341"/>
    </location>
</feature>
<feature type="helix" evidence="35">
    <location>
        <begin position="344"/>
        <end position="361"/>
    </location>
</feature>
<feature type="strand" evidence="35">
    <location>
        <begin position="364"/>
        <end position="367"/>
    </location>
</feature>
<feature type="helix" evidence="35">
    <location>
        <begin position="370"/>
        <end position="374"/>
    </location>
</feature>
<comment type="function">
    <text evidence="3 5 6 9 10">Cytoplasmic uridylyltransferase that mediates the terminal uridylation of mRNAs with short poly(A) tails such as such as act1, hcn1 and urg1 mRNAs, hence facilitating global mRNA decay (PubMed:17353264, PubMed:17449726, PubMed:19430462, PubMed:22751018, PubMed:22885303). Uridylates the 3' ends of actin mRNAs upon S-phase arrest (PubMed:17353264). Also has a weak poly(A) polymerase (PAP) activity (PubMed:22751018, PubMed:22885303). Residue His-336 is responsible for the specificity for UTP (PubMed:22751018, PubMed:22885303). Involved in cell cycle arrest where in association with crb2/rhp9 and chk1 it inhibits unscheduled mitosis (PubMed:10757807).</text>
</comment>
<comment type="catalytic activity">
    <reaction evidence="5 6 7 9 10 11 12">
        <text>RNA(n) + UTP = RNA(n)-3'-uridine ribonucleotide + diphosphate</text>
        <dbReference type="Rhea" id="RHEA:14785"/>
        <dbReference type="Rhea" id="RHEA-COMP:14527"/>
        <dbReference type="Rhea" id="RHEA-COMP:17348"/>
        <dbReference type="ChEBI" id="CHEBI:33019"/>
        <dbReference type="ChEBI" id="CHEBI:46398"/>
        <dbReference type="ChEBI" id="CHEBI:140395"/>
        <dbReference type="ChEBI" id="CHEBI:173116"/>
        <dbReference type="EC" id="2.7.7.52"/>
    </reaction>
</comment>
<comment type="catalytic activity">
    <reaction evidence="4 9 10">
        <text>RNA(n) + ATP = RNA(n)-3'-adenine ribonucleotide + diphosphate</text>
        <dbReference type="Rhea" id="RHEA:11332"/>
        <dbReference type="Rhea" id="RHEA-COMP:14527"/>
        <dbReference type="Rhea" id="RHEA-COMP:17347"/>
        <dbReference type="ChEBI" id="CHEBI:30616"/>
        <dbReference type="ChEBI" id="CHEBI:33019"/>
        <dbReference type="ChEBI" id="CHEBI:140395"/>
        <dbReference type="ChEBI" id="CHEBI:173115"/>
        <dbReference type="EC" id="2.7.7.19"/>
    </reaction>
</comment>
<comment type="cofactor">
    <cofactor evidence="5 10">
        <name>Mg(2+)</name>
        <dbReference type="ChEBI" id="CHEBI:18420"/>
    </cofactor>
    <cofactor evidence="5">
        <name>Mn(2+)</name>
        <dbReference type="ChEBI" id="CHEBI:29035"/>
    </cofactor>
</comment>
<comment type="biophysicochemical properties">
    <kinetics>
        <KM evidence="10">12 uM for UTP</KM>
        <KM evidence="10">312 uM for ATP</KM>
        <text evidence="10">Mutation of His-336 to Asn decreases the Km for ATP to 65 uM and increases the Km for UTP to 45 uM.</text>
    </kinetics>
</comment>
<comment type="subcellular location">
    <subcellularLocation>
        <location evidence="4">Cytoplasm</location>
    </subcellularLocation>
</comment>
<comment type="disruption phenotype">
    <text evidence="7">Stabilizes urg1 transcripts (PubMed:19430462).</text>
</comment>
<comment type="similarity">
    <text evidence="17">Belongs to the DNA polymerase type-B-like family.</text>
</comment>
<comment type="caution">
    <text evidence="5 6 7">Has been first identified as a cytoplasmic poly(A) polymerase (PAP) implicated in cell cycle checkpoint controls (PubMed:12218190). Further studies showed that cid1 had robust poly(U) polymerase activity in vitro and that is was rather an RNA uridylyltransferase (PubMed:17353264, PubMed:17449726).</text>
</comment>
<proteinExistence type="evidence at protein level"/>
<gene>
    <name evidence="13" type="primary">cid1</name>
    <name type="ORF">SPAC19D5.03</name>
</gene>